<comment type="function">
    <text evidence="1">Endonuclease that resolves Holliday junction intermediates in genetic recombination. Cleaves mobile four-strand junctions by introducing symmetrical nicks in paired strands. Promotes annealing of linear ssDNA with homologous dsDNA. Required for DNA repair, homologous recombination and chromosome segregation (By similarity).</text>
</comment>
<comment type="catalytic activity">
    <reaction evidence="2">
        <text>Endonucleolytic cleavage at a junction such as a reciprocal single-stranded crossover between two homologous DNA duplexes (Holliday junction).</text>
        <dbReference type="EC" id="3.1.21.10"/>
    </reaction>
</comment>
<comment type="cofactor">
    <cofactor evidence="1">
        <name>Mg(2+)</name>
        <dbReference type="ChEBI" id="CHEBI:18420"/>
    </cofactor>
    <text evidence="1">Binds 1 Mg(2+) ion per subunit.</text>
</comment>
<comment type="subcellular location">
    <subcellularLocation>
        <location evidence="1">Cytoplasm</location>
    </subcellularLocation>
</comment>
<comment type="similarity">
    <text evidence="3">Belongs to the RecU family.</text>
</comment>
<name>RECU_LISIN</name>
<sequence length="201" mass="22961">MAIGYPGGKKYTASHEGLPSKKRKTPVTYGKRGMSLEDDLNDTIAYYLAHDIAVIHKKPTPVQIVSVDYPKRSSAKIKEAYFKTPSTTDYNGVYKGKYVDFEAKETQNTTSFPLSNFHDHQMTHMANVLKQDGIVFVIIAFQKLGETHFIPFEKFYPFWERMQSGGRKSVTISEIQDVSDQVPYGLNPRLDFLQSIDKLYF</sequence>
<reference key="1">
    <citation type="journal article" date="2001" name="Science">
        <title>Comparative genomics of Listeria species.</title>
        <authorList>
            <person name="Glaser P."/>
            <person name="Frangeul L."/>
            <person name="Buchrieser C."/>
            <person name="Rusniok C."/>
            <person name="Amend A."/>
            <person name="Baquero F."/>
            <person name="Berche P."/>
            <person name="Bloecker H."/>
            <person name="Brandt P."/>
            <person name="Chakraborty T."/>
            <person name="Charbit A."/>
            <person name="Chetouani F."/>
            <person name="Couve E."/>
            <person name="de Daruvar A."/>
            <person name="Dehoux P."/>
            <person name="Domann E."/>
            <person name="Dominguez-Bernal G."/>
            <person name="Duchaud E."/>
            <person name="Durant L."/>
            <person name="Dussurget O."/>
            <person name="Entian K.-D."/>
            <person name="Fsihi H."/>
            <person name="Garcia-del Portillo F."/>
            <person name="Garrido P."/>
            <person name="Gautier L."/>
            <person name="Goebel W."/>
            <person name="Gomez-Lopez N."/>
            <person name="Hain T."/>
            <person name="Hauf J."/>
            <person name="Jackson D."/>
            <person name="Jones L.-M."/>
            <person name="Kaerst U."/>
            <person name="Kreft J."/>
            <person name="Kuhn M."/>
            <person name="Kunst F."/>
            <person name="Kurapkat G."/>
            <person name="Madueno E."/>
            <person name="Maitournam A."/>
            <person name="Mata Vicente J."/>
            <person name="Ng E."/>
            <person name="Nedjari H."/>
            <person name="Nordsiek G."/>
            <person name="Novella S."/>
            <person name="de Pablos B."/>
            <person name="Perez-Diaz J.-C."/>
            <person name="Purcell R."/>
            <person name="Remmel B."/>
            <person name="Rose M."/>
            <person name="Schlueter T."/>
            <person name="Simoes N."/>
            <person name="Tierrez A."/>
            <person name="Vazquez-Boland J.-A."/>
            <person name="Voss H."/>
            <person name="Wehland J."/>
            <person name="Cossart P."/>
        </authorList>
    </citation>
    <scope>NUCLEOTIDE SEQUENCE [LARGE SCALE GENOMIC DNA]</scope>
    <source>
        <strain>ATCC BAA-680 / CLIP 11262</strain>
    </source>
</reference>
<accession>Q92AB7</accession>
<proteinExistence type="inferred from homology"/>
<keyword id="KW-0963">Cytoplasm</keyword>
<keyword id="KW-0227">DNA damage</keyword>
<keyword id="KW-0233">DNA recombination</keyword>
<keyword id="KW-0234">DNA repair</keyword>
<keyword id="KW-0255">Endonuclease</keyword>
<keyword id="KW-0378">Hydrolase</keyword>
<keyword id="KW-0460">Magnesium</keyword>
<keyword id="KW-0479">Metal-binding</keyword>
<keyword id="KW-0540">Nuclease</keyword>
<protein>
    <recommendedName>
        <fullName>Holliday junction resolvase RecU</fullName>
        <ecNumber evidence="2">3.1.21.10</ecNumber>
    </recommendedName>
    <alternativeName>
        <fullName>Recombination protein U homolog</fullName>
    </alternativeName>
</protein>
<gene>
    <name type="primary">recU</name>
    <name type="ordered locus">lin2005</name>
</gene>
<feature type="chain" id="PRO_0000212299" description="Holliday junction resolvase RecU">
    <location>
        <begin position="1"/>
        <end position="201"/>
    </location>
</feature>
<feature type="binding site" evidence="1">
    <location>
        <position position="87"/>
    </location>
    <ligand>
        <name>Mg(2+)</name>
        <dbReference type="ChEBI" id="CHEBI:18420"/>
    </ligand>
</feature>
<feature type="binding site" evidence="1">
    <location>
        <position position="89"/>
    </location>
    <ligand>
        <name>Mg(2+)</name>
        <dbReference type="ChEBI" id="CHEBI:18420"/>
    </ligand>
</feature>
<feature type="binding site" evidence="1">
    <location>
        <position position="102"/>
    </location>
    <ligand>
        <name>Mg(2+)</name>
        <dbReference type="ChEBI" id="CHEBI:18420"/>
    </ligand>
</feature>
<feature type="binding site" evidence="1">
    <location>
        <position position="121"/>
    </location>
    <ligand>
        <name>Mg(2+)</name>
        <dbReference type="ChEBI" id="CHEBI:18420"/>
    </ligand>
</feature>
<feature type="site" description="Transition state stabilizer" evidence="1">
    <location>
        <position position="104"/>
    </location>
</feature>
<dbReference type="EC" id="3.1.21.10" evidence="2"/>
<dbReference type="EMBL" id="AL596170">
    <property type="protein sequence ID" value="CAC97235.1"/>
    <property type="molecule type" value="Genomic_DNA"/>
</dbReference>
<dbReference type="PIR" id="AC1683">
    <property type="entry name" value="AC1683"/>
</dbReference>
<dbReference type="RefSeq" id="WP_003769387.1">
    <property type="nucleotide sequence ID" value="NC_003212.1"/>
</dbReference>
<dbReference type="SMR" id="Q92AB7"/>
<dbReference type="STRING" id="272626.gene:17566363"/>
<dbReference type="GeneID" id="93235343"/>
<dbReference type="KEGG" id="lin:recU"/>
<dbReference type="eggNOG" id="COG3331">
    <property type="taxonomic scope" value="Bacteria"/>
</dbReference>
<dbReference type="HOGENOM" id="CLU_096340_0_0_9"/>
<dbReference type="OrthoDB" id="9783592at2"/>
<dbReference type="Proteomes" id="UP000002513">
    <property type="component" value="Chromosome"/>
</dbReference>
<dbReference type="GO" id="GO:0005737">
    <property type="term" value="C:cytoplasm"/>
    <property type="evidence" value="ECO:0007669"/>
    <property type="project" value="UniProtKB-SubCell"/>
</dbReference>
<dbReference type="GO" id="GO:0004519">
    <property type="term" value="F:endonuclease activity"/>
    <property type="evidence" value="ECO:0007669"/>
    <property type="project" value="UniProtKB-UniRule"/>
</dbReference>
<dbReference type="GO" id="GO:0000287">
    <property type="term" value="F:magnesium ion binding"/>
    <property type="evidence" value="ECO:0007669"/>
    <property type="project" value="UniProtKB-UniRule"/>
</dbReference>
<dbReference type="GO" id="GO:0003676">
    <property type="term" value="F:nucleic acid binding"/>
    <property type="evidence" value="ECO:0007669"/>
    <property type="project" value="InterPro"/>
</dbReference>
<dbReference type="GO" id="GO:0007059">
    <property type="term" value="P:chromosome segregation"/>
    <property type="evidence" value="ECO:0007669"/>
    <property type="project" value="UniProtKB-UniRule"/>
</dbReference>
<dbReference type="GO" id="GO:0006310">
    <property type="term" value="P:DNA recombination"/>
    <property type="evidence" value="ECO:0007669"/>
    <property type="project" value="UniProtKB-UniRule"/>
</dbReference>
<dbReference type="GO" id="GO:0006281">
    <property type="term" value="P:DNA repair"/>
    <property type="evidence" value="ECO:0007669"/>
    <property type="project" value="UniProtKB-UniRule"/>
</dbReference>
<dbReference type="CDD" id="cd22354">
    <property type="entry name" value="RecU-like"/>
    <property type="match status" value="1"/>
</dbReference>
<dbReference type="Gene3D" id="3.40.1350.10">
    <property type="match status" value="1"/>
</dbReference>
<dbReference type="HAMAP" id="MF_00130">
    <property type="entry name" value="RecU"/>
    <property type="match status" value="1"/>
</dbReference>
<dbReference type="InterPro" id="IPR004612">
    <property type="entry name" value="Resolv_RecU"/>
</dbReference>
<dbReference type="InterPro" id="IPR011335">
    <property type="entry name" value="Restrct_endonuc-II-like"/>
</dbReference>
<dbReference type="InterPro" id="IPR011856">
    <property type="entry name" value="tRNA_endonuc-like_dom_sf"/>
</dbReference>
<dbReference type="NCBIfam" id="NF002582">
    <property type="entry name" value="PRK02234.1-3"/>
    <property type="match status" value="1"/>
</dbReference>
<dbReference type="NCBIfam" id="NF002584">
    <property type="entry name" value="PRK02234.1-5"/>
    <property type="match status" value="1"/>
</dbReference>
<dbReference type="NCBIfam" id="TIGR00648">
    <property type="entry name" value="recU"/>
    <property type="match status" value="1"/>
</dbReference>
<dbReference type="Pfam" id="PF03838">
    <property type="entry name" value="RecU"/>
    <property type="match status" value="1"/>
</dbReference>
<dbReference type="PIRSF" id="PIRSF037785">
    <property type="entry name" value="RecU"/>
    <property type="match status" value="1"/>
</dbReference>
<dbReference type="SUPFAM" id="SSF52980">
    <property type="entry name" value="Restriction endonuclease-like"/>
    <property type="match status" value="1"/>
</dbReference>
<organism>
    <name type="scientific">Listeria innocua serovar 6a (strain ATCC BAA-680 / CLIP 11262)</name>
    <dbReference type="NCBI Taxonomy" id="272626"/>
    <lineage>
        <taxon>Bacteria</taxon>
        <taxon>Bacillati</taxon>
        <taxon>Bacillota</taxon>
        <taxon>Bacilli</taxon>
        <taxon>Bacillales</taxon>
        <taxon>Listeriaceae</taxon>
        <taxon>Listeria</taxon>
    </lineage>
</organism>
<evidence type="ECO:0000250" key="1"/>
<evidence type="ECO:0000255" key="2">
    <source>
        <dbReference type="HAMAP-Rule" id="MF_00130"/>
    </source>
</evidence>
<evidence type="ECO:0000305" key="3"/>